<sequence>MYVSENESAVEKWHRLNGVPMSKARNSEEALHEMGLSKYPTERAFNHLSDEQKGMLKALADIEPFEDYISPDLTGDKLWHYNEKGIDKLTKAFHAMSALRTPFPRALTRRDFYNIDPHTRGK</sequence>
<accession>P51707</accession>
<feature type="chain" id="PRO_0000165320" description="Uncharacterized 14.1 kDa protein in cox-rep intergenic region">
    <location>
        <begin position="1"/>
        <end position="122"/>
    </location>
</feature>
<proteinExistence type="predicted"/>
<reference key="1">
    <citation type="journal article" date="1994" name="Mol. Microbiol.">
        <title>Identification of an HP1 phage protein required for site-specific excision.</title>
        <authorList>
            <person name="Esposito D."/>
            <person name="Scocca J.J."/>
        </authorList>
    </citation>
    <scope>NUCLEOTIDE SEQUENCE [GENOMIC DNA]</scope>
</reference>
<reference key="2">
    <citation type="journal article" date="1996" name="Nucleic Acids Res.">
        <title>The complete nucleotide sequence of bacteriophage HP1 DNA.</title>
        <authorList>
            <person name="Esposito D."/>
            <person name="Fitzmaurice W.P."/>
            <person name="Benjamin R.C."/>
            <person name="Goodman S.D."/>
            <person name="Waldman A.S."/>
            <person name="Scocca J.J."/>
        </authorList>
    </citation>
    <scope>NUCLEOTIDE SEQUENCE [LARGE SCALE GENOMIC DNA]</scope>
</reference>
<organism>
    <name type="scientific">Haemophilus phage HP1 (strain HP1c1)</name>
    <name type="common">Bacteriophage HP1</name>
    <dbReference type="NCBI Taxonomy" id="1289570"/>
    <lineage>
        <taxon>Viruses</taxon>
        <taxon>Duplodnaviria</taxon>
        <taxon>Heunggongvirae</taxon>
        <taxon>Uroviricota</taxon>
        <taxon>Caudoviricetes</taxon>
        <taxon>Peduoviridae</taxon>
        <taxon>Hpunavirus</taxon>
        <taxon>Haemophilus phage HP1</taxon>
    </lineage>
</organism>
<name>YO06_BPHC1</name>
<keyword id="KW-1185">Reference proteome</keyword>
<dbReference type="EMBL" id="U24159">
    <property type="protein sequence ID" value="AAB09190.1"/>
    <property type="molecule type" value="Genomic_DNA"/>
</dbReference>
<dbReference type="PIR" id="S72337">
    <property type="entry name" value="S72337"/>
</dbReference>
<dbReference type="RefSeq" id="NP_043474.1">
    <property type="nucleotide sequence ID" value="NC_001697.1"/>
</dbReference>
<dbReference type="SMR" id="P51707"/>
<dbReference type="GeneID" id="1261124"/>
<dbReference type="KEGG" id="vg:1261124"/>
<dbReference type="Proteomes" id="UP000001713">
    <property type="component" value="Segment"/>
</dbReference>
<organismHost>
    <name type="scientific">Haemophilus influenzae</name>
    <dbReference type="NCBI Taxonomy" id="727"/>
</organismHost>
<protein>
    <recommendedName>
        <fullName>Uncharacterized 14.1 kDa protein in cox-rep intergenic region</fullName>
    </recommendedName>
    <alternativeName>
        <fullName>ORF22</fullName>
    </alternativeName>
    <alternativeName>
        <fullName>ORF6</fullName>
    </alternativeName>
</protein>